<feature type="signal peptide" evidence="1">
    <location>
        <begin position="1"/>
        <end position="20"/>
    </location>
</feature>
<feature type="chain" id="PRO_0000014100" description="Uncharacterized protein Mb1395">
    <location>
        <begin position="21"/>
        <end position="340"/>
    </location>
</feature>
<sequence>MGGARRLKLDGSIPNQLARAADAAVALERNGFDGGWTAEASHDPFLPLLLAAEHTSRLELGTNIAVAFARNPMIVANVGWDLQTYSKGRLILGLGTQIRPHIEKRFSMPWGHPARRMREFVAALRAIWLAWQDGTKLCFEGEFYTHKIMTPMFTPEPQPYPVPRVFIAAVGEAMTEMCGEVADGHLGHPMVSKRYLTEVSVPALLRGLARSGRDRSAFEVSCEVMVATGADDAELAAACTATRKQIAFYGSTPAYRKVLEQHGWGDLHPELHRLSKLGEWEAMGGLIDDEMLGAFAVVGPVDTIAGALRNRCEGVVDRVLPIFMAASQECINAALQDFRR</sequence>
<organism>
    <name type="scientific">Mycobacterium bovis (strain ATCC BAA-935 / AF2122/97)</name>
    <dbReference type="NCBI Taxonomy" id="233413"/>
    <lineage>
        <taxon>Bacteria</taxon>
        <taxon>Bacillati</taxon>
        <taxon>Actinomycetota</taxon>
        <taxon>Actinomycetes</taxon>
        <taxon>Mycobacteriales</taxon>
        <taxon>Mycobacteriaceae</taxon>
        <taxon>Mycobacterium</taxon>
        <taxon>Mycobacterium tuberculosis complex</taxon>
    </lineage>
</organism>
<proteinExistence type="inferred from homology"/>
<keyword id="KW-1185">Reference proteome</keyword>
<keyword id="KW-0732">Signal</keyword>
<name>Y1395_MYCBO</name>
<protein>
    <recommendedName>
        <fullName>Uncharacterized protein Mb1395</fullName>
    </recommendedName>
</protein>
<evidence type="ECO:0000255" key="1"/>
<reference key="1">
    <citation type="journal article" date="2003" name="Proc. Natl. Acad. Sci. U.S.A.">
        <title>The complete genome sequence of Mycobacterium bovis.</title>
        <authorList>
            <person name="Garnier T."/>
            <person name="Eiglmeier K."/>
            <person name="Camus J.-C."/>
            <person name="Medina N."/>
            <person name="Mansoor H."/>
            <person name="Pryor M."/>
            <person name="Duthoy S."/>
            <person name="Grondin S."/>
            <person name="Lacroix C."/>
            <person name="Monsempe C."/>
            <person name="Simon S."/>
            <person name="Harris B."/>
            <person name="Atkin R."/>
            <person name="Doggett J."/>
            <person name="Mayes R."/>
            <person name="Keating L."/>
            <person name="Wheeler P.R."/>
            <person name="Parkhill J."/>
            <person name="Barrell B.G."/>
            <person name="Cole S.T."/>
            <person name="Gordon S.V."/>
            <person name="Hewinson R.G."/>
        </authorList>
    </citation>
    <scope>NUCLEOTIDE SEQUENCE [LARGE SCALE GENOMIC DNA]</scope>
    <source>
        <strain>ATCC BAA-935 / AF2122/97</strain>
    </source>
</reference>
<reference key="2">
    <citation type="journal article" date="2017" name="Genome Announc.">
        <title>Updated reference genome sequence and annotation of Mycobacterium bovis AF2122/97.</title>
        <authorList>
            <person name="Malone K.M."/>
            <person name="Farrell D."/>
            <person name="Stuber T.P."/>
            <person name="Schubert O.T."/>
            <person name="Aebersold R."/>
            <person name="Robbe-Austerman S."/>
            <person name="Gordon S.V."/>
        </authorList>
    </citation>
    <scope>NUCLEOTIDE SEQUENCE [LARGE SCALE GENOMIC DNA]</scope>
    <scope>GENOME REANNOTATION</scope>
    <source>
        <strain>ATCC BAA-935 / AF2122/97</strain>
    </source>
</reference>
<gene>
    <name type="ordered locus">BQ2027_MB1395</name>
</gene>
<accession>P64832</accession>
<accession>A0A1R3XY55</accession>
<accession>Q11030</accession>
<accession>X2BHG0</accession>
<dbReference type="EMBL" id="LT708304">
    <property type="protein sequence ID" value="SIT99998.1"/>
    <property type="molecule type" value="Genomic_DNA"/>
</dbReference>
<dbReference type="RefSeq" id="NP_855049.1">
    <property type="nucleotide sequence ID" value="NC_002945.3"/>
</dbReference>
<dbReference type="RefSeq" id="WP_003898842.1">
    <property type="nucleotide sequence ID" value="NC_002945.4"/>
</dbReference>
<dbReference type="SMR" id="P64832"/>
<dbReference type="KEGG" id="mbo:BQ2027_MB1395"/>
<dbReference type="PATRIC" id="fig|233413.5.peg.1529"/>
<dbReference type="Proteomes" id="UP000001419">
    <property type="component" value="Chromosome"/>
</dbReference>
<dbReference type="GO" id="GO:0016705">
    <property type="term" value="F:oxidoreductase activity, acting on paired donors, with incorporation or reduction of molecular oxygen"/>
    <property type="evidence" value="ECO:0007669"/>
    <property type="project" value="InterPro"/>
</dbReference>
<dbReference type="CDD" id="cd01097">
    <property type="entry name" value="Tetrahydromethanopterin_reductase"/>
    <property type="match status" value="1"/>
</dbReference>
<dbReference type="Gene3D" id="3.20.20.30">
    <property type="entry name" value="Luciferase-like domain"/>
    <property type="match status" value="1"/>
</dbReference>
<dbReference type="InterPro" id="IPR050564">
    <property type="entry name" value="F420-G6PD/mer"/>
</dbReference>
<dbReference type="InterPro" id="IPR019919">
    <property type="entry name" value="Lucif-like_OxRdtase_MSMEG_2256"/>
</dbReference>
<dbReference type="InterPro" id="IPR011251">
    <property type="entry name" value="Luciferase-like_dom"/>
</dbReference>
<dbReference type="InterPro" id="IPR036661">
    <property type="entry name" value="Luciferase-like_sf"/>
</dbReference>
<dbReference type="NCBIfam" id="TIGR03617">
    <property type="entry name" value="F420_MSMEG_2256"/>
    <property type="match status" value="1"/>
</dbReference>
<dbReference type="PANTHER" id="PTHR43244">
    <property type="match status" value="1"/>
</dbReference>
<dbReference type="PANTHER" id="PTHR43244:SF2">
    <property type="entry name" value="CONSERVED HYPOTHETICAL ALANINE AND PROLINE-RICH PROTEIN"/>
    <property type="match status" value="1"/>
</dbReference>
<dbReference type="Pfam" id="PF00296">
    <property type="entry name" value="Bac_luciferase"/>
    <property type="match status" value="1"/>
</dbReference>
<dbReference type="SUPFAM" id="SSF51679">
    <property type="entry name" value="Bacterial luciferase-like"/>
    <property type="match status" value="1"/>
</dbReference>